<feature type="chain" id="PRO_0000136580" description="Arabinose 5-phosphate isomerase KdsD">
    <location>
        <begin position="1"/>
        <end position="328"/>
    </location>
</feature>
<feature type="domain" description="SIS" evidence="3">
    <location>
        <begin position="42"/>
        <end position="184"/>
    </location>
</feature>
<feature type="domain" description="CBS 1" evidence="2">
    <location>
        <begin position="210"/>
        <end position="268"/>
    </location>
</feature>
<feature type="domain" description="CBS 2" evidence="2">
    <location>
        <begin position="277"/>
        <end position="328"/>
    </location>
</feature>
<feature type="binding site" evidence="1">
    <location>
        <begin position="75"/>
        <end position="76"/>
    </location>
    <ligand>
        <name>substrate</name>
    </ligand>
</feature>
<feature type="binding site" evidence="1">
    <location>
        <position position="82"/>
    </location>
    <ligand>
        <name>substrate</name>
    </ligand>
</feature>
<feature type="binding site" evidence="1">
    <location>
        <position position="82"/>
    </location>
    <ligand>
        <name>Zn(2+)</name>
        <dbReference type="ChEBI" id="CHEBI:29105"/>
    </ligand>
</feature>
<feature type="binding site" evidence="1">
    <location>
        <position position="88"/>
    </location>
    <ligand>
        <name>substrate</name>
    </ligand>
</feature>
<feature type="binding site" evidence="1">
    <location>
        <begin position="114"/>
        <end position="123"/>
    </location>
    <ligand>
        <name>substrate</name>
    </ligand>
</feature>
<feature type="binding site" evidence="1">
    <location>
        <begin position="148"/>
        <end position="150"/>
    </location>
    <ligand>
        <name>substrate</name>
    </ligand>
</feature>
<feature type="binding site" evidence="1">
    <location>
        <position position="222"/>
    </location>
    <ligand>
        <name>substrate</name>
    </ligand>
</feature>
<feature type="binding site" evidence="1">
    <location>
        <position position="275"/>
    </location>
    <ligand>
        <name>substrate</name>
    </ligand>
</feature>
<feature type="site" description="Catalytically relevant" evidence="1">
    <location>
        <position position="59"/>
    </location>
</feature>
<feature type="site" description="Catalytically relevant" evidence="1">
    <location>
        <position position="111"/>
    </location>
</feature>
<feature type="site" description="Catalytically relevant" evidence="1">
    <location>
        <position position="152"/>
    </location>
</feature>
<feature type="site" description="Catalytically relevant" evidence="1">
    <location>
        <position position="193"/>
    </location>
</feature>
<name>KDSD_SHIFL</name>
<dbReference type="EC" id="5.3.1.13"/>
<dbReference type="EMBL" id="AE005674">
    <property type="protein sequence ID" value="AAN44703.2"/>
    <property type="molecule type" value="Genomic_DNA"/>
</dbReference>
<dbReference type="EMBL" id="AE014073">
    <property type="protein sequence ID" value="AAP18517.1"/>
    <property type="molecule type" value="Genomic_DNA"/>
</dbReference>
<dbReference type="RefSeq" id="WP_005050755.1">
    <property type="nucleotide sequence ID" value="NZ_WPGW01000004.1"/>
</dbReference>
<dbReference type="SMR" id="Q83JF4"/>
<dbReference type="STRING" id="198214.SF3237"/>
<dbReference type="PaxDb" id="198214-SF3237"/>
<dbReference type="KEGG" id="sfl:SF3237"/>
<dbReference type="KEGG" id="sfx:S3455"/>
<dbReference type="PATRIC" id="fig|198214.7.peg.3838"/>
<dbReference type="HOGENOM" id="CLU_040681_13_1_6"/>
<dbReference type="UniPathway" id="UPA00030"/>
<dbReference type="UniPathway" id="UPA00357">
    <property type="reaction ID" value="UER00473"/>
</dbReference>
<dbReference type="Proteomes" id="UP000001006">
    <property type="component" value="Chromosome"/>
</dbReference>
<dbReference type="Proteomes" id="UP000002673">
    <property type="component" value="Chromosome"/>
</dbReference>
<dbReference type="GO" id="GO:0019146">
    <property type="term" value="F:arabinose-5-phosphate isomerase activity"/>
    <property type="evidence" value="ECO:0007669"/>
    <property type="project" value="UniProtKB-EC"/>
</dbReference>
<dbReference type="GO" id="GO:0097367">
    <property type="term" value="F:carbohydrate derivative binding"/>
    <property type="evidence" value="ECO:0007669"/>
    <property type="project" value="InterPro"/>
</dbReference>
<dbReference type="GO" id="GO:0046872">
    <property type="term" value="F:metal ion binding"/>
    <property type="evidence" value="ECO:0007669"/>
    <property type="project" value="UniProtKB-KW"/>
</dbReference>
<dbReference type="GO" id="GO:0009103">
    <property type="term" value="P:lipopolysaccharide biosynthetic process"/>
    <property type="evidence" value="ECO:0007669"/>
    <property type="project" value="UniProtKB-UniPathway"/>
</dbReference>
<dbReference type="CDD" id="cd04604">
    <property type="entry name" value="CBS_pair_SIS_assoc"/>
    <property type="match status" value="1"/>
</dbReference>
<dbReference type="CDD" id="cd05014">
    <property type="entry name" value="SIS_Kpsf"/>
    <property type="match status" value="1"/>
</dbReference>
<dbReference type="FunFam" id="3.10.580.10:FF:000007">
    <property type="entry name" value="Arabinose 5-phosphate isomerase"/>
    <property type="match status" value="1"/>
</dbReference>
<dbReference type="FunFam" id="3.40.50.10490:FF:000011">
    <property type="entry name" value="Arabinose 5-phosphate isomerase"/>
    <property type="match status" value="1"/>
</dbReference>
<dbReference type="Gene3D" id="3.10.580.10">
    <property type="entry name" value="CBS-domain"/>
    <property type="match status" value="1"/>
</dbReference>
<dbReference type="Gene3D" id="3.40.50.10490">
    <property type="entry name" value="Glucose-6-phosphate isomerase like protein, domain 1"/>
    <property type="match status" value="1"/>
</dbReference>
<dbReference type="InterPro" id="IPR000644">
    <property type="entry name" value="CBS_dom"/>
</dbReference>
<dbReference type="InterPro" id="IPR046342">
    <property type="entry name" value="CBS_dom_sf"/>
</dbReference>
<dbReference type="InterPro" id="IPR050986">
    <property type="entry name" value="GutQ/KpsF_isomerases"/>
</dbReference>
<dbReference type="InterPro" id="IPR004800">
    <property type="entry name" value="KdsD/KpsF-type"/>
</dbReference>
<dbReference type="InterPro" id="IPR001347">
    <property type="entry name" value="SIS_dom"/>
</dbReference>
<dbReference type="InterPro" id="IPR046348">
    <property type="entry name" value="SIS_dom_sf"/>
</dbReference>
<dbReference type="InterPro" id="IPR035474">
    <property type="entry name" value="SIS_Kpsf"/>
</dbReference>
<dbReference type="NCBIfam" id="TIGR00393">
    <property type="entry name" value="kpsF"/>
    <property type="match status" value="1"/>
</dbReference>
<dbReference type="NCBIfam" id="NF008141">
    <property type="entry name" value="PRK10892.1"/>
    <property type="match status" value="1"/>
</dbReference>
<dbReference type="PANTHER" id="PTHR42745">
    <property type="match status" value="1"/>
</dbReference>
<dbReference type="PANTHER" id="PTHR42745:SF1">
    <property type="entry name" value="ARABINOSE 5-PHOSPHATE ISOMERASE KDSD"/>
    <property type="match status" value="1"/>
</dbReference>
<dbReference type="Pfam" id="PF00571">
    <property type="entry name" value="CBS"/>
    <property type="match status" value="2"/>
</dbReference>
<dbReference type="Pfam" id="PF01380">
    <property type="entry name" value="SIS"/>
    <property type="match status" value="1"/>
</dbReference>
<dbReference type="PIRSF" id="PIRSF004692">
    <property type="entry name" value="KdsD_KpsF"/>
    <property type="match status" value="1"/>
</dbReference>
<dbReference type="SUPFAM" id="SSF53697">
    <property type="entry name" value="SIS domain"/>
    <property type="match status" value="1"/>
</dbReference>
<dbReference type="PROSITE" id="PS51371">
    <property type="entry name" value="CBS"/>
    <property type="match status" value="2"/>
</dbReference>
<dbReference type="PROSITE" id="PS51464">
    <property type="entry name" value="SIS"/>
    <property type="match status" value="1"/>
</dbReference>
<proteinExistence type="inferred from homology"/>
<protein>
    <recommendedName>
        <fullName>Arabinose 5-phosphate isomerase KdsD</fullName>
        <shortName>API</shortName>
        <shortName>L-API</shortName>
        <ecNumber>5.3.1.13</ecNumber>
    </recommendedName>
</protein>
<comment type="function">
    <text evidence="1">Involved in the biosynthesis of 3-deoxy-D-manno-octulosonate (KDO), a unique 8-carbon sugar component of lipopolysaccharides (LPSs). Catalyzes the reversible aldol-ketol isomerization between D-ribulose 5-phosphate (Ru5P) and D-arabinose 5-phosphate (A5P) (By similarity).</text>
</comment>
<comment type="catalytic activity">
    <reaction>
        <text>D-arabinose 5-phosphate = D-ribulose 5-phosphate</text>
        <dbReference type="Rhea" id="RHEA:23104"/>
        <dbReference type="ChEBI" id="CHEBI:57693"/>
        <dbReference type="ChEBI" id="CHEBI:58121"/>
        <dbReference type="EC" id="5.3.1.13"/>
    </reaction>
</comment>
<comment type="pathway">
    <text>Carbohydrate biosynthesis; 3-deoxy-D-manno-octulosonate biosynthesis; 3-deoxy-D-manno-octulosonate from D-ribulose 5-phosphate: step 1/3.</text>
</comment>
<comment type="pathway">
    <text>Bacterial outer membrane biogenesis; lipopolysaccharide biosynthesis.</text>
</comment>
<comment type="subunit">
    <text evidence="1">Homotetramer.</text>
</comment>
<comment type="similarity">
    <text evidence="4">Belongs to the SIS family. GutQ/KpsF subfamily.</text>
</comment>
<keyword id="KW-0119">Carbohydrate metabolism</keyword>
<keyword id="KW-0129">CBS domain</keyword>
<keyword id="KW-0413">Isomerase</keyword>
<keyword id="KW-0448">Lipopolysaccharide biosynthesis</keyword>
<keyword id="KW-0479">Metal-binding</keyword>
<keyword id="KW-1185">Reference proteome</keyword>
<keyword id="KW-0677">Repeat</keyword>
<keyword id="KW-0862">Zinc</keyword>
<gene>
    <name type="primary">kdsD</name>
    <name type="ordered locus">SF3237</name>
    <name type="ordered locus">S3455</name>
</gene>
<reference key="1">
    <citation type="journal article" date="2002" name="Nucleic Acids Res.">
        <title>Genome sequence of Shigella flexneri 2a: insights into pathogenicity through comparison with genomes of Escherichia coli K12 and O157.</title>
        <authorList>
            <person name="Jin Q."/>
            <person name="Yuan Z."/>
            <person name="Xu J."/>
            <person name="Wang Y."/>
            <person name="Shen Y."/>
            <person name="Lu W."/>
            <person name="Wang J."/>
            <person name="Liu H."/>
            <person name="Yang J."/>
            <person name="Yang F."/>
            <person name="Zhang X."/>
            <person name="Zhang J."/>
            <person name="Yang G."/>
            <person name="Wu H."/>
            <person name="Qu D."/>
            <person name="Dong J."/>
            <person name="Sun L."/>
            <person name="Xue Y."/>
            <person name="Zhao A."/>
            <person name="Gao Y."/>
            <person name="Zhu J."/>
            <person name="Kan B."/>
            <person name="Ding K."/>
            <person name="Chen S."/>
            <person name="Cheng H."/>
            <person name="Yao Z."/>
            <person name="He B."/>
            <person name="Chen R."/>
            <person name="Ma D."/>
            <person name="Qiang B."/>
            <person name="Wen Y."/>
            <person name="Hou Y."/>
            <person name="Yu J."/>
        </authorList>
    </citation>
    <scope>NUCLEOTIDE SEQUENCE [LARGE SCALE GENOMIC DNA]</scope>
    <source>
        <strain>301 / Serotype 2a</strain>
    </source>
</reference>
<reference key="2">
    <citation type="journal article" date="2003" name="Infect. Immun.">
        <title>Complete genome sequence and comparative genomics of Shigella flexneri serotype 2a strain 2457T.</title>
        <authorList>
            <person name="Wei J."/>
            <person name="Goldberg M.B."/>
            <person name="Burland V."/>
            <person name="Venkatesan M.M."/>
            <person name="Deng W."/>
            <person name="Fournier G."/>
            <person name="Mayhew G.F."/>
            <person name="Plunkett G. III"/>
            <person name="Rose D.J."/>
            <person name="Darling A."/>
            <person name="Mau B."/>
            <person name="Perna N.T."/>
            <person name="Payne S.M."/>
            <person name="Runyen-Janecky L.J."/>
            <person name="Zhou S."/>
            <person name="Schwartz D.C."/>
            <person name="Blattner F.R."/>
        </authorList>
    </citation>
    <scope>NUCLEOTIDE SEQUENCE [LARGE SCALE GENOMIC DNA]</scope>
    <source>
        <strain>ATCC 700930 / 2457T / Serotype 2a</strain>
    </source>
</reference>
<accession>Q83JF4</accession>
<evidence type="ECO:0000250" key="1"/>
<evidence type="ECO:0000255" key="2">
    <source>
        <dbReference type="PROSITE-ProRule" id="PRU00703"/>
    </source>
</evidence>
<evidence type="ECO:0000255" key="3">
    <source>
        <dbReference type="PROSITE-ProRule" id="PRU00797"/>
    </source>
</evidence>
<evidence type="ECO:0000305" key="4"/>
<sequence>MSHVELQPGFDFQQAGKEVLAIERECLAELDQYINQNFTLACEKMFWCKGKVVVMGMGKSGHIGRKMAATFASTGTPSFFVHPSEAAHGDLGMVTPQDVVIAISNSGESSEITALIPVLKRLHVPLICITGRPESSMARAADVHLCVKVAKEACPLGLAPTSSTTATLVMGDALAVALLKARGFTAEDFALSHPGGALGRKLLLRVNDIMHTGDEIPHVKKTASLRDALLEVTRKNLGMTVICDDNMMIEGIFTDGDLRRVFDMGVDVRQLSIADVMTPGGIRVRPGILAVEALNLMQSRHITSVMVADGDHLLGVLHMHDLLRAGVV</sequence>
<organism>
    <name type="scientific">Shigella flexneri</name>
    <dbReference type="NCBI Taxonomy" id="623"/>
    <lineage>
        <taxon>Bacteria</taxon>
        <taxon>Pseudomonadati</taxon>
        <taxon>Pseudomonadota</taxon>
        <taxon>Gammaproteobacteria</taxon>
        <taxon>Enterobacterales</taxon>
        <taxon>Enterobacteriaceae</taxon>
        <taxon>Shigella</taxon>
    </lineage>
</organism>